<feature type="chain" id="PRO_0000298241" description="Ion-translocating oxidoreductase complex subunit D">
    <location>
        <begin position="1"/>
        <end position="352"/>
    </location>
</feature>
<feature type="transmembrane region" description="Helical" evidence="1">
    <location>
        <begin position="20"/>
        <end position="40"/>
    </location>
</feature>
<feature type="transmembrane region" description="Helical" evidence="1">
    <location>
        <begin position="42"/>
        <end position="62"/>
    </location>
</feature>
<feature type="transmembrane region" description="Helical" evidence="1">
    <location>
        <begin position="78"/>
        <end position="109"/>
    </location>
</feature>
<feature type="transmembrane region" description="Helical" evidence="1">
    <location>
        <begin position="123"/>
        <end position="143"/>
    </location>
</feature>
<feature type="transmembrane region" description="Helical" evidence="1">
    <location>
        <begin position="148"/>
        <end position="168"/>
    </location>
</feature>
<feature type="transmembrane region" description="Helical" evidence="1">
    <location>
        <begin position="214"/>
        <end position="234"/>
    </location>
</feature>
<feature type="transmembrane region" description="Helical" evidence="1">
    <location>
        <begin position="242"/>
        <end position="262"/>
    </location>
</feature>
<feature type="transmembrane region" description="Helical" evidence="1">
    <location>
        <begin position="267"/>
        <end position="287"/>
    </location>
</feature>
<feature type="transmembrane region" description="Helical" evidence="1">
    <location>
        <begin position="301"/>
        <end position="318"/>
    </location>
</feature>
<feature type="modified residue" description="FMN phosphoryl threonine" evidence="1">
    <location>
        <position position="187"/>
    </location>
</feature>
<accession>Q0T4E7</accession>
<gene>
    <name evidence="1" type="primary">rsxD</name>
    <name type="ordered locus">SFV_1647</name>
</gene>
<organism>
    <name type="scientific">Shigella flexneri serotype 5b (strain 8401)</name>
    <dbReference type="NCBI Taxonomy" id="373384"/>
    <lineage>
        <taxon>Bacteria</taxon>
        <taxon>Pseudomonadati</taxon>
        <taxon>Pseudomonadota</taxon>
        <taxon>Gammaproteobacteria</taxon>
        <taxon>Enterobacterales</taxon>
        <taxon>Enterobacteriaceae</taxon>
        <taxon>Shigella</taxon>
    </lineage>
</organism>
<comment type="function">
    <text evidence="1">Part of a membrane-bound complex that couples electron transfer with translocation of ions across the membrane. Required to maintain the reduced state of SoxR.</text>
</comment>
<comment type="cofactor">
    <cofactor evidence="1">
        <name>FMN</name>
        <dbReference type="ChEBI" id="CHEBI:58210"/>
    </cofactor>
</comment>
<comment type="subunit">
    <text evidence="1">The complex is composed of six subunits: RsxA, RsxB, RsxC, RsxD, RsxE and RsxG.</text>
</comment>
<comment type="subcellular location">
    <subcellularLocation>
        <location evidence="1">Cell inner membrane</location>
        <topology evidence="1">Multi-pass membrane protein</topology>
    </subcellularLocation>
</comment>
<comment type="similarity">
    <text evidence="1">Belongs to the NqrB/RnfD family.</text>
</comment>
<reference key="1">
    <citation type="journal article" date="2006" name="BMC Genomics">
        <title>Complete genome sequence of Shigella flexneri 5b and comparison with Shigella flexneri 2a.</title>
        <authorList>
            <person name="Nie H."/>
            <person name="Yang F."/>
            <person name="Zhang X."/>
            <person name="Yang J."/>
            <person name="Chen L."/>
            <person name="Wang J."/>
            <person name="Xiong Z."/>
            <person name="Peng J."/>
            <person name="Sun L."/>
            <person name="Dong J."/>
            <person name="Xue Y."/>
            <person name="Xu X."/>
            <person name="Chen S."/>
            <person name="Yao Z."/>
            <person name="Shen Y."/>
            <person name="Jin Q."/>
        </authorList>
    </citation>
    <scope>NUCLEOTIDE SEQUENCE [LARGE SCALE GENOMIC DNA]</scope>
    <source>
        <strain>8401</strain>
    </source>
</reference>
<name>RSXD_SHIF8</name>
<proteinExistence type="inferred from homology"/>
<evidence type="ECO:0000255" key="1">
    <source>
        <dbReference type="HAMAP-Rule" id="MF_00462"/>
    </source>
</evidence>
<dbReference type="EC" id="7.-.-.-" evidence="1"/>
<dbReference type="EMBL" id="CP000266">
    <property type="protein sequence ID" value="ABF03818.1"/>
    <property type="molecule type" value="Genomic_DNA"/>
</dbReference>
<dbReference type="RefSeq" id="WP_000231929.1">
    <property type="nucleotide sequence ID" value="NC_008258.1"/>
</dbReference>
<dbReference type="SMR" id="Q0T4E7"/>
<dbReference type="KEGG" id="sfv:SFV_1647"/>
<dbReference type="HOGENOM" id="CLU_042020_0_0_6"/>
<dbReference type="Proteomes" id="UP000000659">
    <property type="component" value="Chromosome"/>
</dbReference>
<dbReference type="GO" id="GO:0005886">
    <property type="term" value="C:plasma membrane"/>
    <property type="evidence" value="ECO:0007669"/>
    <property type="project" value="UniProtKB-SubCell"/>
</dbReference>
<dbReference type="GO" id="GO:0022900">
    <property type="term" value="P:electron transport chain"/>
    <property type="evidence" value="ECO:0007669"/>
    <property type="project" value="UniProtKB-UniRule"/>
</dbReference>
<dbReference type="GO" id="GO:0055085">
    <property type="term" value="P:transmembrane transport"/>
    <property type="evidence" value="ECO:0007669"/>
    <property type="project" value="InterPro"/>
</dbReference>
<dbReference type="HAMAP" id="MF_00462">
    <property type="entry name" value="RsxD_RnfD"/>
    <property type="match status" value="1"/>
</dbReference>
<dbReference type="InterPro" id="IPR004338">
    <property type="entry name" value="NqrB/RnfD"/>
</dbReference>
<dbReference type="InterPro" id="IPR011303">
    <property type="entry name" value="RnfD_bac"/>
</dbReference>
<dbReference type="NCBIfam" id="NF002011">
    <property type="entry name" value="PRK00816.1"/>
    <property type="match status" value="1"/>
</dbReference>
<dbReference type="NCBIfam" id="TIGR01946">
    <property type="entry name" value="rnfD"/>
    <property type="match status" value="1"/>
</dbReference>
<dbReference type="PANTHER" id="PTHR30578">
    <property type="entry name" value="ELECTRON TRANSPORT COMPLEX PROTEIN RNFD"/>
    <property type="match status" value="1"/>
</dbReference>
<dbReference type="PANTHER" id="PTHR30578:SF0">
    <property type="entry name" value="ION-TRANSLOCATING OXIDOREDUCTASE COMPLEX SUBUNIT D"/>
    <property type="match status" value="1"/>
</dbReference>
<dbReference type="Pfam" id="PF03116">
    <property type="entry name" value="NQR2_RnfD_RnfE"/>
    <property type="match status" value="1"/>
</dbReference>
<keyword id="KW-0997">Cell inner membrane</keyword>
<keyword id="KW-1003">Cell membrane</keyword>
<keyword id="KW-0249">Electron transport</keyword>
<keyword id="KW-0285">Flavoprotein</keyword>
<keyword id="KW-0288">FMN</keyword>
<keyword id="KW-0472">Membrane</keyword>
<keyword id="KW-0597">Phosphoprotein</keyword>
<keyword id="KW-1278">Translocase</keyword>
<keyword id="KW-0812">Transmembrane</keyword>
<keyword id="KW-1133">Transmembrane helix</keyword>
<keyword id="KW-0813">Transport</keyword>
<protein>
    <recommendedName>
        <fullName evidence="1">Ion-translocating oxidoreductase complex subunit D</fullName>
        <ecNumber evidence="1">7.-.-.-</ecNumber>
    </recommendedName>
    <alternativeName>
        <fullName evidence="1">Rsx electron transport complex subunit D</fullName>
    </alternativeName>
</protein>
<sequence>MVFRIASSPYTHNQRQTSRIMLLVLLAAVPGIAAQLWFFGWGTLVQILLASVSALLAEALVLKLRKQSVAATLKDNSALLTGLLLAVSIPPLAPWWMVVLGTVFAVIIAKQLYGGLGQNPFNPAMIGYVVLLISFPVQMTSWLPPHEIAVNIPGFIDAIQVIFSGHTASGGDMNTLRLGIDGISQATPLDTFKTSVRAGHSVEQIMQYPIYSGILAGAGWQWVNLAWLAGGVWLLWQKAIRWHIPLSFLVTLALCATLGWLFSPETLAAPQIHLLSGATMLGAFFILTDPVTASTTNRGRLMFGALAGLLVWLIRSFGGYPDGVAFAVLLANITVPLIDYYTRPRVYGHRKG</sequence>